<organism>
    <name type="scientific">Clostridium botulinum (strain Loch Maree / Type A3)</name>
    <dbReference type="NCBI Taxonomy" id="498214"/>
    <lineage>
        <taxon>Bacteria</taxon>
        <taxon>Bacillati</taxon>
        <taxon>Bacillota</taxon>
        <taxon>Clostridia</taxon>
        <taxon>Eubacteriales</taxon>
        <taxon>Clostridiaceae</taxon>
        <taxon>Clostridium</taxon>
    </lineage>
</organism>
<dbReference type="EMBL" id="CP000962">
    <property type="protein sequence ID" value="ACA56023.1"/>
    <property type="molecule type" value="Genomic_DNA"/>
</dbReference>
<dbReference type="RefSeq" id="WP_012343933.1">
    <property type="nucleotide sequence ID" value="NC_010520.1"/>
</dbReference>
<dbReference type="SMR" id="B1KX71"/>
<dbReference type="KEGG" id="cbl:CLK_1903"/>
<dbReference type="HOGENOM" id="CLU_016077_6_2_9"/>
<dbReference type="GO" id="GO:0016887">
    <property type="term" value="F:ATP hydrolysis activity"/>
    <property type="evidence" value="ECO:0007669"/>
    <property type="project" value="InterPro"/>
</dbReference>
<dbReference type="GO" id="GO:0005525">
    <property type="term" value="F:GTP binding"/>
    <property type="evidence" value="ECO:0007669"/>
    <property type="project" value="UniProtKB-UniRule"/>
</dbReference>
<dbReference type="GO" id="GO:0043022">
    <property type="term" value="F:ribosome binding"/>
    <property type="evidence" value="ECO:0007669"/>
    <property type="project" value="TreeGrafter"/>
</dbReference>
<dbReference type="GO" id="GO:0042254">
    <property type="term" value="P:ribosome biogenesis"/>
    <property type="evidence" value="ECO:0007669"/>
    <property type="project" value="UniProtKB-KW"/>
</dbReference>
<dbReference type="CDD" id="cd01894">
    <property type="entry name" value="EngA1"/>
    <property type="match status" value="1"/>
</dbReference>
<dbReference type="CDD" id="cd01895">
    <property type="entry name" value="EngA2"/>
    <property type="match status" value="1"/>
</dbReference>
<dbReference type="FunFam" id="3.30.300.20:FF:000004">
    <property type="entry name" value="GTPase Der"/>
    <property type="match status" value="1"/>
</dbReference>
<dbReference type="FunFam" id="3.40.50.300:FF:000040">
    <property type="entry name" value="GTPase Der"/>
    <property type="match status" value="1"/>
</dbReference>
<dbReference type="FunFam" id="3.40.50.300:FF:000057">
    <property type="entry name" value="GTPase Der"/>
    <property type="match status" value="1"/>
</dbReference>
<dbReference type="Gene3D" id="3.30.300.20">
    <property type="match status" value="1"/>
</dbReference>
<dbReference type="Gene3D" id="3.40.50.300">
    <property type="entry name" value="P-loop containing nucleotide triphosphate hydrolases"/>
    <property type="match status" value="2"/>
</dbReference>
<dbReference type="HAMAP" id="MF_00195">
    <property type="entry name" value="GTPase_Der"/>
    <property type="match status" value="1"/>
</dbReference>
<dbReference type="InterPro" id="IPR003593">
    <property type="entry name" value="AAA+_ATPase"/>
</dbReference>
<dbReference type="InterPro" id="IPR031166">
    <property type="entry name" value="G_ENGA"/>
</dbReference>
<dbReference type="InterPro" id="IPR006073">
    <property type="entry name" value="GTP-bd"/>
</dbReference>
<dbReference type="InterPro" id="IPR016484">
    <property type="entry name" value="GTPase_Der"/>
</dbReference>
<dbReference type="InterPro" id="IPR032859">
    <property type="entry name" value="KH_dom-like"/>
</dbReference>
<dbReference type="InterPro" id="IPR015946">
    <property type="entry name" value="KH_dom-like_a/b"/>
</dbReference>
<dbReference type="InterPro" id="IPR027417">
    <property type="entry name" value="P-loop_NTPase"/>
</dbReference>
<dbReference type="InterPro" id="IPR005225">
    <property type="entry name" value="Small_GTP-bd"/>
</dbReference>
<dbReference type="NCBIfam" id="TIGR03594">
    <property type="entry name" value="GTPase_EngA"/>
    <property type="match status" value="1"/>
</dbReference>
<dbReference type="NCBIfam" id="TIGR00231">
    <property type="entry name" value="small_GTP"/>
    <property type="match status" value="2"/>
</dbReference>
<dbReference type="PANTHER" id="PTHR43834">
    <property type="entry name" value="GTPASE DER"/>
    <property type="match status" value="1"/>
</dbReference>
<dbReference type="PANTHER" id="PTHR43834:SF6">
    <property type="entry name" value="GTPASE DER"/>
    <property type="match status" value="1"/>
</dbReference>
<dbReference type="Pfam" id="PF14714">
    <property type="entry name" value="KH_dom-like"/>
    <property type="match status" value="1"/>
</dbReference>
<dbReference type="Pfam" id="PF01926">
    <property type="entry name" value="MMR_HSR1"/>
    <property type="match status" value="2"/>
</dbReference>
<dbReference type="PIRSF" id="PIRSF006485">
    <property type="entry name" value="GTP-binding_EngA"/>
    <property type="match status" value="1"/>
</dbReference>
<dbReference type="PRINTS" id="PR00326">
    <property type="entry name" value="GTP1OBG"/>
</dbReference>
<dbReference type="SMART" id="SM00382">
    <property type="entry name" value="AAA"/>
    <property type="match status" value="2"/>
</dbReference>
<dbReference type="SUPFAM" id="SSF52540">
    <property type="entry name" value="P-loop containing nucleoside triphosphate hydrolases"/>
    <property type="match status" value="2"/>
</dbReference>
<dbReference type="PROSITE" id="PS51712">
    <property type="entry name" value="G_ENGA"/>
    <property type="match status" value="2"/>
</dbReference>
<accession>B1KX71</accession>
<sequence>MGKPIVAIVGRPNVGKSTLFNKLAGKRIAIVQDTPGVTRDRIYAEAEWLNYKFTMIDTGGIEPESEDIIVSQMRRQAQIAIEMANVIIFLVDGKEGLAPADEEVAQMLRKSKKPVVLVVNKIDKLKDENNAYEFYNLGIGDPVTISSSQALGLGDMLDRVVEYFKDDESDGEDDERINIAFIGKPNVGKSSLINKLLGEERLIVSDIPGTTRDSIDSYVDTEFGEFTLIDTAGLRRKSKVKEEIERYSVIRTYASIERADVCILMIDAIEGISEQDQKIIGYAHDINKAILVIVNKWDLVEKDDKTMDKFKKELKVNLSFMPYAKYLFISAKTGQRVVKVLQTAKECYDNYTKRVKTGVLNDVISQAIMMKEPPIVGTKRLKIYYVTQIGTKPPTFIFFVNDPACIHFSYQRYLENQLRENFDFQGTGIKTEFRERKEK</sequence>
<reference key="1">
    <citation type="journal article" date="2007" name="PLoS ONE">
        <title>Analysis of the neurotoxin complex genes in Clostridium botulinum A1-A4 and B1 strains: BoNT/A3, /Ba4 and /B1 clusters are located within plasmids.</title>
        <authorList>
            <person name="Smith T.J."/>
            <person name="Hill K.K."/>
            <person name="Foley B.T."/>
            <person name="Detter J.C."/>
            <person name="Munk A.C."/>
            <person name="Bruce D.C."/>
            <person name="Doggett N.A."/>
            <person name="Smith L.A."/>
            <person name="Marks J.D."/>
            <person name="Xie G."/>
            <person name="Brettin T.S."/>
        </authorList>
    </citation>
    <scope>NUCLEOTIDE SEQUENCE [LARGE SCALE GENOMIC DNA]</scope>
    <source>
        <strain>Loch Maree / Type A3</strain>
    </source>
</reference>
<evidence type="ECO:0000255" key="1">
    <source>
        <dbReference type="HAMAP-Rule" id="MF_00195"/>
    </source>
</evidence>
<feature type="chain" id="PRO_1000099110" description="GTPase Der">
    <location>
        <begin position="1"/>
        <end position="439"/>
    </location>
</feature>
<feature type="domain" description="EngA-type G 1">
    <location>
        <begin position="4"/>
        <end position="168"/>
    </location>
</feature>
<feature type="domain" description="EngA-type G 2">
    <location>
        <begin position="177"/>
        <end position="352"/>
    </location>
</feature>
<feature type="domain" description="KH-like" evidence="1">
    <location>
        <begin position="353"/>
        <end position="437"/>
    </location>
</feature>
<feature type="binding site" evidence="1">
    <location>
        <begin position="10"/>
        <end position="17"/>
    </location>
    <ligand>
        <name>GTP</name>
        <dbReference type="ChEBI" id="CHEBI:37565"/>
        <label>1</label>
    </ligand>
</feature>
<feature type="binding site" evidence="1">
    <location>
        <begin position="57"/>
        <end position="61"/>
    </location>
    <ligand>
        <name>GTP</name>
        <dbReference type="ChEBI" id="CHEBI:37565"/>
        <label>1</label>
    </ligand>
</feature>
<feature type="binding site" evidence="1">
    <location>
        <begin position="120"/>
        <end position="123"/>
    </location>
    <ligand>
        <name>GTP</name>
        <dbReference type="ChEBI" id="CHEBI:37565"/>
        <label>1</label>
    </ligand>
</feature>
<feature type="binding site" evidence="1">
    <location>
        <begin position="183"/>
        <end position="190"/>
    </location>
    <ligand>
        <name>GTP</name>
        <dbReference type="ChEBI" id="CHEBI:37565"/>
        <label>2</label>
    </ligand>
</feature>
<feature type="binding site" evidence="1">
    <location>
        <begin position="230"/>
        <end position="234"/>
    </location>
    <ligand>
        <name>GTP</name>
        <dbReference type="ChEBI" id="CHEBI:37565"/>
        <label>2</label>
    </ligand>
</feature>
<feature type="binding site" evidence="1">
    <location>
        <begin position="295"/>
        <end position="298"/>
    </location>
    <ligand>
        <name>GTP</name>
        <dbReference type="ChEBI" id="CHEBI:37565"/>
        <label>2</label>
    </ligand>
</feature>
<comment type="function">
    <text evidence="1">GTPase that plays an essential role in the late steps of ribosome biogenesis.</text>
</comment>
<comment type="subunit">
    <text evidence="1">Associates with the 50S ribosomal subunit.</text>
</comment>
<comment type="similarity">
    <text evidence="1">Belongs to the TRAFAC class TrmE-Era-EngA-EngB-Septin-like GTPase superfamily. EngA (Der) GTPase family.</text>
</comment>
<protein>
    <recommendedName>
        <fullName evidence="1">GTPase Der</fullName>
    </recommendedName>
    <alternativeName>
        <fullName evidence="1">GTP-binding protein EngA</fullName>
    </alternativeName>
</protein>
<gene>
    <name evidence="1" type="primary">der</name>
    <name type="synonym">engA</name>
    <name type="ordered locus">CLK_1903</name>
</gene>
<proteinExistence type="inferred from homology"/>
<name>DER_CLOBM</name>
<keyword id="KW-0342">GTP-binding</keyword>
<keyword id="KW-0547">Nucleotide-binding</keyword>
<keyword id="KW-0677">Repeat</keyword>
<keyword id="KW-0690">Ribosome biogenesis</keyword>